<evidence type="ECO:0000269" key="1">
    <source>
    </source>
</evidence>
<evidence type="ECO:0000305" key="2"/>
<accession>P82170</accession>
<proteinExistence type="evidence at protein level"/>
<reference evidence="2" key="1">
    <citation type="journal article" date="2000" name="Insect Biochem. Mol. Biol.">
        <title>Studies on proteins in post-ecdysial nymphal cuticle of locust, Locusta migratoria, and cockroach, Blaberus craniifer.</title>
        <authorList>
            <person name="Andersen S.O."/>
        </authorList>
    </citation>
    <scope>PROTEIN SEQUENCE</scope>
    <scope>MASS SPECTROMETRY</scope>
    <source>
        <tissue evidence="1">Fifth instar larvae cuticle</tissue>
    </source>
</reference>
<name>CU064_LOCMI</name>
<protein>
    <recommendedName>
        <fullName>Cuticle protein 6.4</fullName>
    </recommendedName>
    <alternativeName>
        <fullName>LmNCP6.4</fullName>
    </alternativeName>
</protein>
<keyword id="KW-0193">Cuticle</keyword>
<keyword id="KW-0903">Direct protein sequencing</keyword>
<dbReference type="GO" id="GO:0042302">
    <property type="term" value="F:structural constituent of cuticle"/>
    <property type="evidence" value="ECO:0007669"/>
    <property type="project" value="UniProtKB-KW"/>
</dbReference>
<organism>
    <name type="scientific">Locusta migratoria</name>
    <name type="common">Migratory locust</name>
    <dbReference type="NCBI Taxonomy" id="7004"/>
    <lineage>
        <taxon>Eukaryota</taxon>
        <taxon>Metazoa</taxon>
        <taxon>Ecdysozoa</taxon>
        <taxon>Arthropoda</taxon>
        <taxon>Hexapoda</taxon>
        <taxon>Insecta</taxon>
        <taxon>Pterygota</taxon>
        <taxon>Neoptera</taxon>
        <taxon>Polyneoptera</taxon>
        <taxon>Orthoptera</taxon>
        <taxon>Caelifera</taxon>
        <taxon>Acrididea</taxon>
        <taxon>Acridomorpha</taxon>
        <taxon>Acridoidea</taxon>
        <taxon>Acrididae</taxon>
        <taxon>Oedipodinae</taxon>
        <taxon>Locusta</taxon>
    </lineage>
</organism>
<feature type="chain" id="PRO_0000252033" description="Cuticle protein 6.4">
    <location>
        <begin position="1"/>
        <end position="62"/>
    </location>
</feature>
<sequence>GLAYATGLGYSAPLAYSGLYGGYGYGYPGYAGYYGYGGLGYRSLGYSGLGYSGLGYYGGYHY</sequence>
<comment type="function">
    <text evidence="2">Component of the cuticle of migratory locust which contains more than 100 different structural proteins.</text>
</comment>
<comment type="mass spectrometry"/>